<organism>
    <name type="scientific">Burkholderia pseudomallei (strain K96243)</name>
    <dbReference type="NCBI Taxonomy" id="272560"/>
    <lineage>
        <taxon>Bacteria</taxon>
        <taxon>Pseudomonadati</taxon>
        <taxon>Pseudomonadota</taxon>
        <taxon>Betaproteobacteria</taxon>
        <taxon>Burkholderiales</taxon>
        <taxon>Burkholderiaceae</taxon>
        <taxon>Burkholderia</taxon>
        <taxon>pseudomallei group</taxon>
    </lineage>
</organism>
<dbReference type="EC" id="1.3.1.9" evidence="1"/>
<dbReference type="EMBL" id="BX571965">
    <property type="protein sequence ID" value="CAH36018.1"/>
    <property type="molecule type" value="Genomic_DNA"/>
</dbReference>
<dbReference type="RefSeq" id="WP_004550594.1">
    <property type="nucleotide sequence ID" value="NZ_CP009538.1"/>
</dbReference>
<dbReference type="RefSeq" id="YP_108617.1">
    <property type="nucleotide sequence ID" value="NC_006350.1"/>
</dbReference>
<dbReference type="SMR" id="Q63TE9"/>
<dbReference type="STRING" id="272560.BPSL2019"/>
<dbReference type="KEGG" id="bps:BPSL2019"/>
<dbReference type="PATRIC" id="fig|272560.51.peg.4177"/>
<dbReference type="eggNOG" id="COG3007">
    <property type="taxonomic scope" value="Bacteria"/>
</dbReference>
<dbReference type="UniPathway" id="UPA00094"/>
<dbReference type="Proteomes" id="UP000000605">
    <property type="component" value="Chromosome 1"/>
</dbReference>
<dbReference type="GO" id="GO:0004318">
    <property type="term" value="F:enoyl-[acyl-carrier-protein] reductase (NADH) activity"/>
    <property type="evidence" value="ECO:0007669"/>
    <property type="project" value="UniProtKB-UniRule"/>
</dbReference>
<dbReference type="GO" id="GO:0051287">
    <property type="term" value="F:NAD binding"/>
    <property type="evidence" value="ECO:0007669"/>
    <property type="project" value="UniProtKB-UniRule"/>
</dbReference>
<dbReference type="GO" id="GO:0050343">
    <property type="term" value="F:trans-2-enoyl-CoA reductase (NADH) activity"/>
    <property type="evidence" value="ECO:0007669"/>
    <property type="project" value="TreeGrafter"/>
</dbReference>
<dbReference type="GO" id="GO:0006633">
    <property type="term" value="P:fatty acid biosynthetic process"/>
    <property type="evidence" value="ECO:0007669"/>
    <property type="project" value="UniProtKB-UniRule"/>
</dbReference>
<dbReference type="FunFam" id="3.40.50.720:FF:000221">
    <property type="entry name" value="Enoyl-[acyl-carrier-protein] reductase [NADH]"/>
    <property type="match status" value="1"/>
</dbReference>
<dbReference type="Gene3D" id="3.40.50.720">
    <property type="entry name" value="NAD(P)-binding Rossmann-like Domain"/>
    <property type="match status" value="1"/>
</dbReference>
<dbReference type="HAMAP" id="MF_01838">
    <property type="entry name" value="FabV_reductase"/>
    <property type="match status" value="1"/>
</dbReference>
<dbReference type="InterPro" id="IPR024906">
    <property type="entry name" value="Eno_Rdtase_FAD-bd_dom"/>
</dbReference>
<dbReference type="InterPro" id="IPR024910">
    <property type="entry name" value="Enoyl-CoA_Rdtase_cat_dom"/>
</dbReference>
<dbReference type="InterPro" id="IPR050048">
    <property type="entry name" value="FabV-like_NADH_b"/>
</dbReference>
<dbReference type="InterPro" id="IPR010758">
    <property type="entry name" value="Trans-2-enoyl-CoA_reductase"/>
</dbReference>
<dbReference type="NCBIfam" id="NF043048">
    <property type="entry name" value="EnoyACPredFabV"/>
    <property type="match status" value="1"/>
</dbReference>
<dbReference type="NCBIfam" id="NF010177">
    <property type="entry name" value="PRK13656.1"/>
    <property type="match status" value="1"/>
</dbReference>
<dbReference type="PANTHER" id="PTHR37480">
    <property type="entry name" value="ENOYL-[ACYL-CARRIER-PROTEIN] REDUCTASE [NADH]"/>
    <property type="match status" value="1"/>
</dbReference>
<dbReference type="PANTHER" id="PTHR37480:SF1">
    <property type="entry name" value="ENOYL-[ACYL-CARRIER-PROTEIN] REDUCTASE [NADH]"/>
    <property type="match status" value="1"/>
</dbReference>
<dbReference type="Pfam" id="PF07055">
    <property type="entry name" value="Eno-Rase_FAD_bd"/>
    <property type="match status" value="1"/>
</dbReference>
<dbReference type="Pfam" id="PF12242">
    <property type="entry name" value="Eno-Rase_NADH_b"/>
    <property type="match status" value="1"/>
</dbReference>
<dbReference type="Pfam" id="PF12241">
    <property type="entry name" value="Enoyl_reductase"/>
    <property type="match status" value="1"/>
</dbReference>
<proteinExistence type="inferred from homology"/>
<comment type="function">
    <text evidence="1">Involved in the final reduction of the elongation cycle of fatty acid synthesis (FAS II). Catalyzes the reduction of a carbon-carbon double bond in an enoyl moiety that is covalently linked to an acyl carrier protein (ACP).</text>
</comment>
<comment type="catalytic activity">
    <reaction evidence="1">
        <text>a 2,3-saturated acyl-[ACP] + NAD(+) = a (2E)-enoyl-[ACP] + NADH + H(+)</text>
        <dbReference type="Rhea" id="RHEA:10240"/>
        <dbReference type="Rhea" id="RHEA-COMP:9925"/>
        <dbReference type="Rhea" id="RHEA-COMP:9926"/>
        <dbReference type="ChEBI" id="CHEBI:15378"/>
        <dbReference type="ChEBI" id="CHEBI:57540"/>
        <dbReference type="ChEBI" id="CHEBI:57945"/>
        <dbReference type="ChEBI" id="CHEBI:78784"/>
        <dbReference type="ChEBI" id="CHEBI:78785"/>
        <dbReference type="EC" id="1.3.1.9"/>
    </reaction>
</comment>
<comment type="pathway">
    <text evidence="1">Lipid metabolism; fatty acid biosynthesis.</text>
</comment>
<comment type="subunit">
    <text evidence="1">Monomer.</text>
</comment>
<comment type="similarity">
    <text evidence="1">Belongs to the TER reductase family.</text>
</comment>
<evidence type="ECO:0000255" key="1">
    <source>
        <dbReference type="HAMAP-Rule" id="MF_01838"/>
    </source>
</evidence>
<protein>
    <recommendedName>
        <fullName evidence="1">Enoyl-[acyl-carrier-protein] reductase [NADH]</fullName>
        <shortName evidence="1">ENR</shortName>
        <ecNumber evidence="1">1.3.1.9</ecNumber>
    </recommendedName>
</protein>
<feature type="chain" id="PRO_0000220039" description="Enoyl-[acyl-carrier-protein] reductase [NADH]">
    <location>
        <begin position="1"/>
        <end position="397"/>
    </location>
</feature>
<feature type="active site" description="Proton donor" evidence="1">
    <location>
        <position position="235"/>
    </location>
</feature>
<feature type="binding site" evidence="1">
    <location>
        <begin position="48"/>
        <end position="53"/>
    </location>
    <ligand>
        <name>NAD(+)</name>
        <dbReference type="ChEBI" id="CHEBI:57540"/>
    </ligand>
</feature>
<feature type="binding site" evidence="1">
    <location>
        <begin position="74"/>
        <end position="75"/>
    </location>
    <ligand>
        <name>NAD(+)</name>
        <dbReference type="ChEBI" id="CHEBI:57540"/>
    </ligand>
</feature>
<feature type="binding site" evidence="1">
    <location>
        <begin position="111"/>
        <end position="112"/>
    </location>
    <ligand>
        <name>NAD(+)</name>
        <dbReference type="ChEBI" id="CHEBI:57540"/>
    </ligand>
</feature>
<feature type="binding site" evidence="1">
    <location>
        <begin position="139"/>
        <end position="140"/>
    </location>
    <ligand>
        <name>NAD(+)</name>
        <dbReference type="ChEBI" id="CHEBI:57540"/>
    </ligand>
</feature>
<feature type="binding site" evidence="1">
    <location>
        <position position="225"/>
    </location>
    <ligand>
        <name>substrate</name>
    </ligand>
</feature>
<feature type="binding site" evidence="1">
    <location>
        <position position="244"/>
    </location>
    <ligand>
        <name>NAD(+)</name>
        <dbReference type="ChEBI" id="CHEBI:57540"/>
    </ligand>
</feature>
<feature type="binding site" evidence="1">
    <location>
        <begin position="273"/>
        <end position="275"/>
    </location>
    <ligand>
        <name>NAD(+)</name>
        <dbReference type="ChEBI" id="CHEBI:57540"/>
    </ligand>
</feature>
<feature type="site" description="Plays an important role in discriminating NADH against NADPH" evidence="1">
    <location>
        <position position="75"/>
    </location>
</feature>
<sequence>MIIKPRVRGFICVTTHPAGCAASVREQIAYVARRGPIERGPKKVLVIGASTGYGLAARIAAAFGVGAATLGVFFERAPADAKPGTAGWYNSAAFHDEAAARGLQATSVNGDAFSDEIKHKTIDAIRRDLGQVDLVVYSVAAPRRAHPKTGVTHQSTLKPIGHAVRLRGIDTDNEAIKETLLQPATPDEIADTVAVMGGEDWRMWIDALDAAGVLADGAKTTAFTYLGEQVTHDIYWNGSIGEAKKDLDRTVLALRDKLAARGGDARVSVLKAVVTQASSAIPMMPLYLSLLFKVMKARGTHEGCIEQVDGLLRDSLYGAQPHVDAEGRLRADRLELDPAVQARVLELWDQVTDDNLYTLTDFAGYKAEFLRLFGFGIDGVDYDAPVEPNVRIPNLIE</sequence>
<name>FABV_BURPS</name>
<keyword id="KW-0275">Fatty acid biosynthesis</keyword>
<keyword id="KW-0276">Fatty acid metabolism</keyword>
<keyword id="KW-0444">Lipid biosynthesis</keyword>
<keyword id="KW-0443">Lipid metabolism</keyword>
<keyword id="KW-0520">NAD</keyword>
<keyword id="KW-0560">Oxidoreductase</keyword>
<keyword id="KW-1185">Reference proteome</keyword>
<gene>
    <name evidence="1" type="primary">fabV</name>
    <name type="ordered locus">BPSL2019</name>
</gene>
<accession>Q63TE9</accession>
<reference key="1">
    <citation type="journal article" date="2004" name="Proc. Natl. Acad. Sci. U.S.A.">
        <title>Genomic plasticity of the causative agent of melioidosis, Burkholderia pseudomallei.</title>
        <authorList>
            <person name="Holden M.T.G."/>
            <person name="Titball R.W."/>
            <person name="Peacock S.J."/>
            <person name="Cerdeno-Tarraga A.-M."/>
            <person name="Atkins T."/>
            <person name="Crossman L.C."/>
            <person name="Pitt T."/>
            <person name="Churcher C."/>
            <person name="Mungall K.L."/>
            <person name="Bentley S.D."/>
            <person name="Sebaihia M."/>
            <person name="Thomson N.R."/>
            <person name="Bason N."/>
            <person name="Beacham I.R."/>
            <person name="Brooks K."/>
            <person name="Brown K.A."/>
            <person name="Brown N.F."/>
            <person name="Challis G.L."/>
            <person name="Cherevach I."/>
            <person name="Chillingworth T."/>
            <person name="Cronin A."/>
            <person name="Crossett B."/>
            <person name="Davis P."/>
            <person name="DeShazer D."/>
            <person name="Feltwell T."/>
            <person name="Fraser A."/>
            <person name="Hance Z."/>
            <person name="Hauser H."/>
            <person name="Holroyd S."/>
            <person name="Jagels K."/>
            <person name="Keith K.E."/>
            <person name="Maddison M."/>
            <person name="Moule S."/>
            <person name="Price C."/>
            <person name="Quail M.A."/>
            <person name="Rabbinowitsch E."/>
            <person name="Rutherford K."/>
            <person name="Sanders M."/>
            <person name="Simmonds M."/>
            <person name="Songsivilai S."/>
            <person name="Stevens K."/>
            <person name="Tumapa S."/>
            <person name="Vesaratchavest M."/>
            <person name="Whitehead S."/>
            <person name="Yeats C."/>
            <person name="Barrell B.G."/>
            <person name="Oyston P.C.F."/>
            <person name="Parkhill J."/>
        </authorList>
    </citation>
    <scope>NUCLEOTIDE SEQUENCE [LARGE SCALE GENOMIC DNA]</scope>
    <source>
        <strain>K96243</strain>
    </source>
</reference>